<proteinExistence type="inferred from homology"/>
<name>ERP_MYCBO</name>
<organism>
    <name type="scientific">Mycobacterium bovis (strain ATCC BAA-935 / AF2122/97)</name>
    <dbReference type="NCBI Taxonomy" id="233413"/>
    <lineage>
        <taxon>Bacteria</taxon>
        <taxon>Bacillati</taxon>
        <taxon>Actinomycetota</taxon>
        <taxon>Actinomycetes</taxon>
        <taxon>Mycobacteriales</taxon>
        <taxon>Mycobacteriaceae</taxon>
        <taxon>Mycobacterium</taxon>
        <taxon>Mycobacterium tuberculosis complex</taxon>
    </lineage>
</organism>
<dbReference type="EMBL" id="LT708304">
    <property type="protein sequence ID" value="SIU02469.1"/>
    <property type="molecule type" value="Genomic_DNA"/>
</dbReference>
<dbReference type="RefSeq" id="NP_857477.1">
    <property type="nucleotide sequence ID" value="NC_002945.3"/>
</dbReference>
<dbReference type="RefSeq" id="WP_003420801.1">
    <property type="nucleotide sequence ID" value="NC_002945.4"/>
</dbReference>
<dbReference type="KEGG" id="mbo:BQ2027_MB3840"/>
<dbReference type="PATRIC" id="fig|233413.5.peg.4198"/>
<dbReference type="Proteomes" id="UP000001419">
    <property type="component" value="Chromosome"/>
</dbReference>
<dbReference type="GO" id="GO:0005886">
    <property type="term" value="C:plasma membrane"/>
    <property type="evidence" value="ECO:0007669"/>
    <property type="project" value="UniProtKB-SubCell"/>
</dbReference>
<dbReference type="InterPro" id="IPR008164">
    <property type="entry name" value="XGLTT_repeat"/>
</dbReference>
<dbReference type="Pfam" id="PF01744">
    <property type="entry name" value="GLTT"/>
    <property type="match status" value="1"/>
</dbReference>
<sequence length="284" mass="27700">MPNRRRRKLSTAMSAVAALAVASPCAYFLVYESTETTERPEHHEFKQAAVLTDLPGELMSALSQGLSQFGINIPPVPSLTGSGDASTGLTGPGLTSPGLTSPGLTSPGLTDPALTSPGLTPTLPGSLAAPGTTLAPTPGVGANPALTNPALTSPTGATPGLTSPTGLDPALGGANEIPITTPVGLDPGADGTYPILGDPTLGTIPSSPATTSTGGGGLVNDVMQVANELGASQAIDLLKGVLMPSIMQAVQNGGAAAPAASPPVPPIPAAAAVPPTDPITVPVA</sequence>
<accession>P0A5P5</accession>
<accession>A0A1R3Y5A2</accession>
<accession>O53586</accession>
<accession>Q50793</accession>
<accession>Q53468</accession>
<accession>X2BPB4</accession>
<feature type="signal peptide" evidence="2">
    <location>
        <begin position="1"/>
        <end position="22"/>
    </location>
</feature>
<feature type="chain" id="PRO_0000021200" description="Exported repetitive protein">
    <location>
        <begin position="23"/>
        <end position="284"/>
    </location>
</feature>
<feature type="topological domain" description="Extracellular" evidence="2">
    <location>
        <begin position="23"/>
        <end position="252"/>
    </location>
</feature>
<feature type="transmembrane region" description="Helical" evidence="2">
    <location>
        <begin position="253"/>
        <end position="273"/>
    </location>
</feature>
<feature type="topological domain" description="Cytoplasmic" evidence="2">
    <location>
        <begin position="274"/>
        <end position="284"/>
    </location>
</feature>
<feature type="repeat" description="1-1">
    <location>
        <begin position="92"/>
        <end position="96"/>
    </location>
</feature>
<feature type="repeat" description="1-2">
    <location>
        <begin position="97"/>
        <end position="101"/>
    </location>
</feature>
<feature type="repeat" description="1-3">
    <location>
        <begin position="102"/>
        <end position="106"/>
    </location>
</feature>
<feature type="repeat" description="1-4">
    <location>
        <begin position="107"/>
        <end position="111"/>
    </location>
</feature>
<feature type="repeat" description="1-5">
    <location>
        <begin position="112"/>
        <end position="116"/>
    </location>
</feature>
<feature type="repeat" description="1-6">
    <location>
        <begin position="117"/>
        <end position="121"/>
    </location>
</feature>
<feature type="repeat" description="2-1">
    <location>
        <begin position="144"/>
        <end position="148"/>
    </location>
</feature>
<feature type="repeat" description="2-2">
    <location>
        <begin position="149"/>
        <end position="153"/>
    </location>
</feature>
<feature type="repeat" description="2-3">
    <location>
        <begin position="154"/>
        <end position="158"/>
    </location>
</feature>
<feature type="repeat" description="2-4">
    <location>
        <begin position="159"/>
        <end position="163"/>
    </location>
</feature>
<feature type="repeat" description="2-5">
    <location>
        <begin position="164"/>
        <end position="168"/>
    </location>
</feature>
<feature type="repeat" description="2-6">
    <location>
        <begin position="169"/>
        <end position="173"/>
    </location>
</feature>
<feature type="region of interest" description="Disordered" evidence="3">
    <location>
        <begin position="80"/>
        <end position="216"/>
    </location>
</feature>
<feature type="region of interest" description="6 X 5 AA tandem repeats of P-[GA]-L-T-S">
    <location>
        <begin position="92"/>
        <end position="121"/>
    </location>
</feature>
<feature type="region of interest" description="6 X 5 AA approximate tandem repeats of P-[ATG]-[LG]-X-X">
    <location>
        <begin position="144"/>
        <end position="173"/>
    </location>
</feature>
<feature type="compositionally biased region" description="Low complexity" evidence="3">
    <location>
        <begin position="86"/>
        <end position="110"/>
    </location>
</feature>
<feature type="compositionally biased region" description="Polar residues" evidence="3">
    <location>
        <begin position="145"/>
        <end position="165"/>
    </location>
</feature>
<feature type="compositionally biased region" description="Low complexity" evidence="3">
    <location>
        <begin position="202"/>
        <end position="212"/>
    </location>
</feature>
<evidence type="ECO:0000250" key="1"/>
<evidence type="ECO:0000255" key="2"/>
<evidence type="ECO:0000256" key="3">
    <source>
        <dbReference type="SAM" id="MobiDB-lite"/>
    </source>
</evidence>
<evidence type="ECO:0000305" key="4"/>
<comment type="function">
    <text evidence="1">Surface-exposed protein required for multiplication and intracellular growth.</text>
</comment>
<comment type="subcellular location">
    <subcellularLocation>
        <location evidence="4">Cell membrane</location>
        <topology evidence="4">Single-pass type I membrane protein</topology>
    </subcellularLocation>
</comment>
<comment type="similarity">
    <text evidence="4">To M.leprae 28 kDa antigen.</text>
</comment>
<reference key="1">
    <citation type="journal article" date="2003" name="Proc. Natl. Acad. Sci. U.S.A.">
        <title>The complete genome sequence of Mycobacterium bovis.</title>
        <authorList>
            <person name="Garnier T."/>
            <person name="Eiglmeier K."/>
            <person name="Camus J.-C."/>
            <person name="Medina N."/>
            <person name="Mansoor H."/>
            <person name="Pryor M."/>
            <person name="Duthoy S."/>
            <person name="Grondin S."/>
            <person name="Lacroix C."/>
            <person name="Monsempe C."/>
            <person name="Simon S."/>
            <person name="Harris B."/>
            <person name="Atkin R."/>
            <person name="Doggett J."/>
            <person name="Mayes R."/>
            <person name="Keating L."/>
            <person name="Wheeler P.R."/>
            <person name="Parkhill J."/>
            <person name="Barrell B.G."/>
            <person name="Cole S.T."/>
            <person name="Gordon S.V."/>
            <person name="Hewinson R.G."/>
        </authorList>
    </citation>
    <scope>NUCLEOTIDE SEQUENCE [LARGE SCALE GENOMIC DNA]</scope>
    <source>
        <strain>ATCC BAA-935 / AF2122/97</strain>
    </source>
</reference>
<reference key="2">
    <citation type="journal article" date="2017" name="Genome Announc.">
        <title>Updated reference genome sequence and annotation of Mycobacterium bovis AF2122/97.</title>
        <authorList>
            <person name="Malone K.M."/>
            <person name="Farrell D."/>
            <person name="Stuber T.P."/>
            <person name="Schubert O.T."/>
            <person name="Aebersold R."/>
            <person name="Robbe-Austerman S."/>
            <person name="Gordon S.V."/>
        </authorList>
    </citation>
    <scope>NUCLEOTIDE SEQUENCE [LARGE SCALE GENOMIC DNA]</scope>
    <scope>GENOME REANNOTATION</scope>
    <source>
        <strain>ATCC BAA-935 / AF2122/97</strain>
    </source>
</reference>
<keyword id="KW-1003">Cell membrane</keyword>
<keyword id="KW-0472">Membrane</keyword>
<keyword id="KW-1185">Reference proteome</keyword>
<keyword id="KW-0677">Repeat</keyword>
<keyword id="KW-0732">Signal</keyword>
<keyword id="KW-0812">Transmembrane</keyword>
<keyword id="KW-1133">Transmembrane helix</keyword>
<gene>
    <name type="primary">erp</name>
    <name type="synonym">pirG</name>
    <name type="ordered locus">BQ2027_MB3840</name>
</gene>
<protein>
    <recommendedName>
        <fullName>Exported repetitive protein</fullName>
    </recommendedName>
    <alternativeName>
        <fullName>Cell surface protein PirG</fullName>
    </alternativeName>
    <alternativeName>
        <fullName>EXP53</fullName>
    </alternativeName>
</protein>